<organism>
    <name type="scientific">Escherichia coli O1:K1 / APEC</name>
    <dbReference type="NCBI Taxonomy" id="405955"/>
    <lineage>
        <taxon>Bacteria</taxon>
        <taxon>Pseudomonadati</taxon>
        <taxon>Pseudomonadota</taxon>
        <taxon>Gammaproteobacteria</taxon>
        <taxon>Enterobacterales</taxon>
        <taxon>Enterobacteriaceae</taxon>
        <taxon>Escherichia</taxon>
    </lineage>
</organism>
<name>RPOA_ECOK1</name>
<sequence length="329" mass="36512">MQGSVTEFLKPRLVDIEQVSSTHAKVTLEPLERGFGHTLGNALRRILLSSMPGCAVTEVEIDGVLHEYSTKEGVQEDILEILLNLKGLAVRVQGKDEVILTLNKSGIGPVTAADITHDGDVEIVKPQHVICHLTDENASISMRIKVQRGRGYVPASTRIHSEEDERPIGRLLVDACYSPVERIAYNVEAARVEQRTDLDKLVIEMETNGTIDPEEAIRRAATILAEQLEAFVDLRDVRQPEVKEEKPEFDPILLRPVDDLELTVRSANCLKAEAIHYIGDLVQRTEVELLKTPNLGKKSLTEIKDVLASRGLSLGMRLENWPPASIADE</sequence>
<keyword id="KW-0240">DNA-directed RNA polymerase</keyword>
<keyword id="KW-0548">Nucleotidyltransferase</keyword>
<keyword id="KW-1185">Reference proteome</keyword>
<keyword id="KW-0804">Transcription</keyword>
<keyword id="KW-0808">Transferase</keyword>
<evidence type="ECO:0000255" key="1">
    <source>
        <dbReference type="HAMAP-Rule" id="MF_00059"/>
    </source>
</evidence>
<protein>
    <recommendedName>
        <fullName evidence="1">DNA-directed RNA polymerase subunit alpha</fullName>
        <shortName evidence="1">RNAP subunit alpha</shortName>
        <ecNumber evidence="1">2.7.7.6</ecNumber>
    </recommendedName>
    <alternativeName>
        <fullName evidence="1">RNA polymerase subunit alpha</fullName>
    </alternativeName>
    <alternativeName>
        <fullName evidence="1">Transcriptase subunit alpha</fullName>
    </alternativeName>
</protein>
<feature type="chain" id="PRO_0000296801" description="DNA-directed RNA polymerase subunit alpha">
    <location>
        <begin position="1"/>
        <end position="329"/>
    </location>
</feature>
<feature type="region of interest" description="Alpha N-terminal domain (alpha-NTD)" evidence="1">
    <location>
        <begin position="1"/>
        <end position="235"/>
    </location>
</feature>
<feature type="region of interest" description="Alpha C-terminal domain (alpha-CTD)" evidence="1">
    <location>
        <begin position="249"/>
        <end position="329"/>
    </location>
</feature>
<proteinExistence type="inferred from homology"/>
<reference key="1">
    <citation type="journal article" date="2007" name="J. Bacteriol.">
        <title>The genome sequence of avian pathogenic Escherichia coli strain O1:K1:H7 shares strong similarities with human extraintestinal pathogenic E. coli genomes.</title>
        <authorList>
            <person name="Johnson T.J."/>
            <person name="Kariyawasam S."/>
            <person name="Wannemuehler Y."/>
            <person name="Mangiamele P."/>
            <person name="Johnson S.J."/>
            <person name="Doetkott C."/>
            <person name="Skyberg J.A."/>
            <person name="Lynne A.M."/>
            <person name="Johnson J.R."/>
            <person name="Nolan L.K."/>
        </authorList>
    </citation>
    <scope>NUCLEOTIDE SEQUENCE [LARGE SCALE GENOMIC DNA]</scope>
</reference>
<accession>A1AGI6</accession>
<comment type="function">
    <text evidence="1">DNA-dependent RNA polymerase catalyzes the transcription of DNA into RNA using the four ribonucleoside triphosphates as substrates.</text>
</comment>
<comment type="catalytic activity">
    <reaction evidence="1">
        <text>RNA(n) + a ribonucleoside 5'-triphosphate = RNA(n+1) + diphosphate</text>
        <dbReference type="Rhea" id="RHEA:21248"/>
        <dbReference type="Rhea" id="RHEA-COMP:14527"/>
        <dbReference type="Rhea" id="RHEA-COMP:17342"/>
        <dbReference type="ChEBI" id="CHEBI:33019"/>
        <dbReference type="ChEBI" id="CHEBI:61557"/>
        <dbReference type="ChEBI" id="CHEBI:140395"/>
        <dbReference type="EC" id="2.7.7.6"/>
    </reaction>
</comment>
<comment type="subunit">
    <text evidence="1">Homodimer. The RNAP catalytic core consists of 2 alpha, 1 beta, 1 beta' and 1 omega subunit. When a sigma factor is associated with the core the holoenzyme is formed, which can initiate transcription.</text>
</comment>
<comment type="domain">
    <text evidence="1">The N-terminal domain is essential for RNAP assembly and basal transcription, whereas the C-terminal domain is involved in interaction with transcriptional regulators and with upstream promoter elements.</text>
</comment>
<comment type="similarity">
    <text evidence="1">Belongs to the RNA polymerase alpha chain family.</text>
</comment>
<gene>
    <name evidence="1" type="primary">rpoA</name>
    <name type="ordered locus">Ecok1_32820</name>
    <name type="ORF">APECO1_3152</name>
</gene>
<dbReference type="EC" id="2.7.7.6" evidence="1"/>
<dbReference type="EMBL" id="CP000468">
    <property type="protein sequence ID" value="ABJ02776.1"/>
    <property type="molecule type" value="Genomic_DNA"/>
</dbReference>
<dbReference type="RefSeq" id="WP_001162094.1">
    <property type="nucleotide sequence ID" value="NZ_CADILS010000044.1"/>
</dbReference>
<dbReference type="BMRB" id="A1AGI6"/>
<dbReference type="EMDB" id="EMD-28845"/>
<dbReference type="SMR" id="A1AGI6"/>
<dbReference type="GeneID" id="93778692"/>
<dbReference type="KEGG" id="ecv:APECO1_3152"/>
<dbReference type="HOGENOM" id="CLU_053084_0_0_6"/>
<dbReference type="Proteomes" id="UP000008216">
    <property type="component" value="Chromosome"/>
</dbReference>
<dbReference type="GO" id="GO:0005737">
    <property type="term" value="C:cytoplasm"/>
    <property type="evidence" value="ECO:0007669"/>
    <property type="project" value="UniProtKB-ARBA"/>
</dbReference>
<dbReference type="GO" id="GO:0000428">
    <property type="term" value="C:DNA-directed RNA polymerase complex"/>
    <property type="evidence" value="ECO:0007669"/>
    <property type="project" value="UniProtKB-KW"/>
</dbReference>
<dbReference type="GO" id="GO:0003677">
    <property type="term" value="F:DNA binding"/>
    <property type="evidence" value="ECO:0007669"/>
    <property type="project" value="UniProtKB-UniRule"/>
</dbReference>
<dbReference type="GO" id="GO:0003899">
    <property type="term" value="F:DNA-directed RNA polymerase activity"/>
    <property type="evidence" value="ECO:0007669"/>
    <property type="project" value="UniProtKB-UniRule"/>
</dbReference>
<dbReference type="GO" id="GO:0046983">
    <property type="term" value="F:protein dimerization activity"/>
    <property type="evidence" value="ECO:0007669"/>
    <property type="project" value="InterPro"/>
</dbReference>
<dbReference type="GO" id="GO:0006351">
    <property type="term" value="P:DNA-templated transcription"/>
    <property type="evidence" value="ECO:0007669"/>
    <property type="project" value="UniProtKB-UniRule"/>
</dbReference>
<dbReference type="CDD" id="cd06928">
    <property type="entry name" value="RNAP_alpha_NTD"/>
    <property type="match status" value="1"/>
</dbReference>
<dbReference type="FunFam" id="1.10.150.20:FF:000001">
    <property type="entry name" value="DNA-directed RNA polymerase subunit alpha"/>
    <property type="match status" value="1"/>
</dbReference>
<dbReference type="FunFam" id="2.170.120.12:FF:000001">
    <property type="entry name" value="DNA-directed RNA polymerase subunit alpha"/>
    <property type="match status" value="1"/>
</dbReference>
<dbReference type="Gene3D" id="1.10.150.20">
    <property type="entry name" value="5' to 3' exonuclease, C-terminal subdomain"/>
    <property type="match status" value="1"/>
</dbReference>
<dbReference type="Gene3D" id="2.170.120.12">
    <property type="entry name" value="DNA-directed RNA polymerase, insert domain"/>
    <property type="match status" value="1"/>
</dbReference>
<dbReference type="Gene3D" id="3.30.1360.10">
    <property type="entry name" value="RNA polymerase, RBP11-like subunit"/>
    <property type="match status" value="1"/>
</dbReference>
<dbReference type="HAMAP" id="MF_00059">
    <property type="entry name" value="RNApol_bact_RpoA"/>
    <property type="match status" value="1"/>
</dbReference>
<dbReference type="InterPro" id="IPR011262">
    <property type="entry name" value="DNA-dir_RNA_pol_insert"/>
</dbReference>
<dbReference type="InterPro" id="IPR011263">
    <property type="entry name" value="DNA-dir_RNA_pol_RpoA/D/Rpb3"/>
</dbReference>
<dbReference type="InterPro" id="IPR011773">
    <property type="entry name" value="DNA-dir_RpoA"/>
</dbReference>
<dbReference type="InterPro" id="IPR036603">
    <property type="entry name" value="RBP11-like"/>
</dbReference>
<dbReference type="InterPro" id="IPR011260">
    <property type="entry name" value="RNAP_asu_C"/>
</dbReference>
<dbReference type="InterPro" id="IPR036643">
    <property type="entry name" value="RNApol_insert_sf"/>
</dbReference>
<dbReference type="NCBIfam" id="NF003513">
    <property type="entry name" value="PRK05182.1-2"/>
    <property type="match status" value="1"/>
</dbReference>
<dbReference type="NCBIfam" id="NF003519">
    <property type="entry name" value="PRK05182.2-5"/>
    <property type="match status" value="1"/>
</dbReference>
<dbReference type="NCBIfam" id="TIGR02027">
    <property type="entry name" value="rpoA"/>
    <property type="match status" value="1"/>
</dbReference>
<dbReference type="Pfam" id="PF01000">
    <property type="entry name" value="RNA_pol_A_bac"/>
    <property type="match status" value="1"/>
</dbReference>
<dbReference type="Pfam" id="PF03118">
    <property type="entry name" value="RNA_pol_A_CTD"/>
    <property type="match status" value="1"/>
</dbReference>
<dbReference type="Pfam" id="PF01193">
    <property type="entry name" value="RNA_pol_L"/>
    <property type="match status" value="1"/>
</dbReference>
<dbReference type="SMART" id="SM00662">
    <property type="entry name" value="RPOLD"/>
    <property type="match status" value="1"/>
</dbReference>
<dbReference type="SUPFAM" id="SSF47789">
    <property type="entry name" value="C-terminal domain of RNA polymerase alpha subunit"/>
    <property type="match status" value="1"/>
</dbReference>
<dbReference type="SUPFAM" id="SSF56553">
    <property type="entry name" value="Insert subdomain of RNA polymerase alpha subunit"/>
    <property type="match status" value="1"/>
</dbReference>
<dbReference type="SUPFAM" id="SSF55257">
    <property type="entry name" value="RBP11-like subunits of RNA polymerase"/>
    <property type="match status" value="1"/>
</dbReference>